<sequence>MAYLELDLQIATEETANLPSEADFRLWVEKALPEVDEEFEVTIRIVDEEESHALNHEYRGKDKPTNVLSFPFEAPPGLELPLLGDLVICAQIVAKEAAEQNKELFHHWAHMTIHGILHLRGYDHINDDEADEMESIETELLASLSISDPYLIKE</sequence>
<organism>
    <name type="scientific">Marinomonas sp. (strain MWYL1)</name>
    <dbReference type="NCBI Taxonomy" id="400668"/>
    <lineage>
        <taxon>Bacteria</taxon>
        <taxon>Pseudomonadati</taxon>
        <taxon>Pseudomonadota</taxon>
        <taxon>Gammaproteobacteria</taxon>
        <taxon>Oceanospirillales</taxon>
        <taxon>Oceanospirillaceae</taxon>
        <taxon>Marinomonas</taxon>
    </lineage>
</organism>
<proteinExistence type="inferred from homology"/>
<dbReference type="EC" id="3.1.-.-" evidence="1"/>
<dbReference type="EMBL" id="CP000749">
    <property type="protein sequence ID" value="ABR71822.1"/>
    <property type="molecule type" value="Genomic_DNA"/>
</dbReference>
<dbReference type="SMR" id="A6VZE3"/>
<dbReference type="STRING" id="400668.Mmwyl1_2911"/>
<dbReference type="KEGG" id="mmw:Mmwyl1_2911"/>
<dbReference type="eggNOG" id="COG0319">
    <property type="taxonomic scope" value="Bacteria"/>
</dbReference>
<dbReference type="HOGENOM" id="CLU_106710_0_1_6"/>
<dbReference type="OrthoDB" id="9807740at2"/>
<dbReference type="GO" id="GO:0005737">
    <property type="term" value="C:cytoplasm"/>
    <property type="evidence" value="ECO:0007669"/>
    <property type="project" value="UniProtKB-SubCell"/>
</dbReference>
<dbReference type="GO" id="GO:0004222">
    <property type="term" value="F:metalloendopeptidase activity"/>
    <property type="evidence" value="ECO:0007669"/>
    <property type="project" value="InterPro"/>
</dbReference>
<dbReference type="GO" id="GO:0004521">
    <property type="term" value="F:RNA endonuclease activity"/>
    <property type="evidence" value="ECO:0007669"/>
    <property type="project" value="UniProtKB-UniRule"/>
</dbReference>
<dbReference type="GO" id="GO:0008270">
    <property type="term" value="F:zinc ion binding"/>
    <property type="evidence" value="ECO:0007669"/>
    <property type="project" value="UniProtKB-UniRule"/>
</dbReference>
<dbReference type="GO" id="GO:0006364">
    <property type="term" value="P:rRNA processing"/>
    <property type="evidence" value="ECO:0007669"/>
    <property type="project" value="UniProtKB-UniRule"/>
</dbReference>
<dbReference type="Gene3D" id="3.40.390.30">
    <property type="entry name" value="Metalloproteases ('zincins'), catalytic domain"/>
    <property type="match status" value="1"/>
</dbReference>
<dbReference type="HAMAP" id="MF_00009">
    <property type="entry name" value="Endoribonucl_YbeY"/>
    <property type="match status" value="1"/>
</dbReference>
<dbReference type="InterPro" id="IPR023091">
    <property type="entry name" value="MetalPrtase_cat_dom_sf_prd"/>
</dbReference>
<dbReference type="InterPro" id="IPR002036">
    <property type="entry name" value="YbeY"/>
</dbReference>
<dbReference type="NCBIfam" id="TIGR00043">
    <property type="entry name" value="rRNA maturation RNase YbeY"/>
    <property type="match status" value="1"/>
</dbReference>
<dbReference type="PANTHER" id="PTHR46986">
    <property type="entry name" value="ENDORIBONUCLEASE YBEY, CHLOROPLASTIC"/>
    <property type="match status" value="1"/>
</dbReference>
<dbReference type="PANTHER" id="PTHR46986:SF1">
    <property type="entry name" value="ENDORIBONUCLEASE YBEY, CHLOROPLASTIC"/>
    <property type="match status" value="1"/>
</dbReference>
<dbReference type="Pfam" id="PF02130">
    <property type="entry name" value="YbeY"/>
    <property type="match status" value="1"/>
</dbReference>
<dbReference type="SUPFAM" id="SSF55486">
    <property type="entry name" value="Metalloproteases ('zincins'), catalytic domain"/>
    <property type="match status" value="1"/>
</dbReference>
<gene>
    <name evidence="1" type="primary">ybeY</name>
    <name type="ordered locus">Mmwyl1_2911</name>
</gene>
<keyword id="KW-0963">Cytoplasm</keyword>
<keyword id="KW-0255">Endonuclease</keyword>
<keyword id="KW-0378">Hydrolase</keyword>
<keyword id="KW-0479">Metal-binding</keyword>
<keyword id="KW-0540">Nuclease</keyword>
<keyword id="KW-0690">Ribosome biogenesis</keyword>
<keyword id="KW-0698">rRNA processing</keyword>
<keyword id="KW-0862">Zinc</keyword>
<comment type="function">
    <text evidence="1">Single strand-specific metallo-endoribonuclease involved in late-stage 70S ribosome quality control and in maturation of the 3' terminus of the 16S rRNA.</text>
</comment>
<comment type="cofactor">
    <cofactor evidence="1">
        <name>Zn(2+)</name>
        <dbReference type="ChEBI" id="CHEBI:29105"/>
    </cofactor>
    <text evidence="1">Binds 1 zinc ion.</text>
</comment>
<comment type="subcellular location">
    <subcellularLocation>
        <location evidence="1">Cytoplasm</location>
    </subcellularLocation>
</comment>
<comment type="similarity">
    <text evidence="1">Belongs to the endoribonuclease YbeY family.</text>
</comment>
<reference key="1">
    <citation type="submission" date="2007-06" db="EMBL/GenBank/DDBJ databases">
        <title>Complete sequence of Marinomonas sp. MWYL1.</title>
        <authorList>
            <consortium name="US DOE Joint Genome Institute"/>
            <person name="Copeland A."/>
            <person name="Lucas S."/>
            <person name="Lapidus A."/>
            <person name="Barry K."/>
            <person name="Glavina del Rio T."/>
            <person name="Dalin E."/>
            <person name="Tice H."/>
            <person name="Pitluck S."/>
            <person name="Kiss H."/>
            <person name="Brettin T."/>
            <person name="Bruce D."/>
            <person name="Detter J.C."/>
            <person name="Han C."/>
            <person name="Schmutz J."/>
            <person name="Larimer F."/>
            <person name="Land M."/>
            <person name="Hauser L."/>
            <person name="Kyrpides N."/>
            <person name="Kim E."/>
            <person name="Johnston A.W.B."/>
            <person name="Todd J.D."/>
            <person name="Rogers R."/>
            <person name="Wexler M."/>
            <person name="Bond P.L."/>
            <person name="Li Y."/>
            <person name="Richardson P."/>
        </authorList>
    </citation>
    <scope>NUCLEOTIDE SEQUENCE [LARGE SCALE GENOMIC DNA]</scope>
    <source>
        <strain>MWYL1</strain>
    </source>
</reference>
<accession>A6VZE3</accession>
<feature type="chain" id="PRO_1000073908" description="Endoribonuclease YbeY">
    <location>
        <begin position="1"/>
        <end position="154"/>
    </location>
</feature>
<feature type="binding site" evidence="1">
    <location>
        <position position="114"/>
    </location>
    <ligand>
        <name>Zn(2+)</name>
        <dbReference type="ChEBI" id="CHEBI:29105"/>
        <note>catalytic</note>
    </ligand>
</feature>
<feature type="binding site" evidence="1">
    <location>
        <position position="118"/>
    </location>
    <ligand>
        <name>Zn(2+)</name>
        <dbReference type="ChEBI" id="CHEBI:29105"/>
        <note>catalytic</note>
    </ligand>
</feature>
<feature type="binding site" evidence="1">
    <location>
        <position position="124"/>
    </location>
    <ligand>
        <name>Zn(2+)</name>
        <dbReference type="ChEBI" id="CHEBI:29105"/>
        <note>catalytic</note>
    </ligand>
</feature>
<protein>
    <recommendedName>
        <fullName evidence="1">Endoribonuclease YbeY</fullName>
        <ecNumber evidence="1">3.1.-.-</ecNumber>
    </recommendedName>
</protein>
<name>YBEY_MARMS</name>
<evidence type="ECO:0000255" key="1">
    <source>
        <dbReference type="HAMAP-Rule" id="MF_00009"/>
    </source>
</evidence>